<reference key="1">
    <citation type="journal article" date="1998" name="Structure">
        <title>Crystal structure of porcine cathepsin H determined at 2.1-A resolution: location of the mini-chain C-terminal carboxyl group defines cathepsin H aminopeptidase function.</title>
        <authorList>
            <person name="Guncar G."/>
            <person name="Podobnik M."/>
            <person name="Pungercar J."/>
            <person name="Strukelj B."/>
            <person name="Turk V."/>
            <person name="Turk D."/>
        </authorList>
    </citation>
    <scope>NUCLEOTIDE SEQUENCE [MRNA]</scope>
    <scope>X-RAY CRYSTALLOGRAPHY (2.1 ANGSTROMS)</scope>
    <source>
        <tissue>Peripheral blood</tissue>
        <tissue>Spleen</tissue>
    </source>
</reference>
<dbReference type="EC" id="3.4.22.16"/>
<dbReference type="EMBL" id="AF001169">
    <property type="protein sequence ID" value="AAB93957.1"/>
    <property type="molecule type" value="mRNA"/>
</dbReference>
<dbReference type="RefSeq" id="NP_999094.1">
    <property type="nucleotide sequence ID" value="NM_213929.2"/>
</dbReference>
<dbReference type="PDB" id="1NB3">
    <property type="method" value="X-ray"/>
    <property type="resolution" value="2.80 A"/>
    <property type="chains" value="A/B/C/D=116-334, P/R/S/T=98-105"/>
</dbReference>
<dbReference type="PDB" id="1NB5">
    <property type="method" value="X-ray"/>
    <property type="resolution" value="2.40 A"/>
    <property type="chains" value="A/B/C/D=116-334, P/R/S/T=98-105"/>
</dbReference>
<dbReference type="PDB" id="8PCH">
    <property type="method" value="X-ray"/>
    <property type="resolution" value="2.10 A"/>
    <property type="chains" value="A=116-334, P=98-105"/>
</dbReference>
<dbReference type="PDBsum" id="1NB3"/>
<dbReference type="PDBsum" id="1NB5"/>
<dbReference type="PDBsum" id="8PCH"/>
<dbReference type="SMR" id="O46427"/>
<dbReference type="FunCoup" id="O46427">
    <property type="interactions" value="533"/>
</dbReference>
<dbReference type="IntAct" id="O46427">
    <property type="interactions" value="2"/>
</dbReference>
<dbReference type="STRING" id="9823.ENSSSCP00000001934"/>
<dbReference type="MEROPS" id="C01.040"/>
<dbReference type="GlyCosmos" id="O46427">
    <property type="glycosylation" value="3 sites, No reported glycans"/>
</dbReference>
<dbReference type="GlyGen" id="O46427">
    <property type="glycosylation" value="3 sites"/>
</dbReference>
<dbReference type="PaxDb" id="9823-ENSSSCP00000001934"/>
<dbReference type="PeptideAtlas" id="O46427"/>
<dbReference type="Ensembl" id="ENSSSCT00000001983.4">
    <property type="protein sequence ID" value="ENSSSCP00000001934.1"/>
    <property type="gene ID" value="ENSSSCG00000001770.5"/>
</dbReference>
<dbReference type="Ensembl" id="ENSSSCT00025104075.1">
    <property type="protein sequence ID" value="ENSSSCP00025046196.1"/>
    <property type="gene ID" value="ENSSSCG00025075350.1"/>
</dbReference>
<dbReference type="Ensembl" id="ENSSSCT00035019633.1">
    <property type="protein sequence ID" value="ENSSSCP00035006994.1"/>
    <property type="gene ID" value="ENSSSCG00035015394.1"/>
</dbReference>
<dbReference type="Ensembl" id="ENSSSCT00045050141.1">
    <property type="protein sequence ID" value="ENSSSCP00045034889.1"/>
    <property type="gene ID" value="ENSSSCG00045029217.1"/>
</dbReference>
<dbReference type="Ensembl" id="ENSSSCT00065041570.1">
    <property type="protein sequence ID" value="ENSSSCP00065017623.1"/>
    <property type="gene ID" value="ENSSSCG00065030727.1"/>
</dbReference>
<dbReference type="Ensembl" id="ENSSSCT00085014440">
    <property type="protein sequence ID" value="ENSSSCP00085010402"/>
    <property type="gene ID" value="ENSSSCG00085007539"/>
</dbReference>
<dbReference type="Ensembl" id="ENSSSCT00090049513">
    <property type="protein sequence ID" value="ENSSSCP00090030687"/>
    <property type="gene ID" value="ENSSSCG00090027993"/>
</dbReference>
<dbReference type="Ensembl" id="ENSSSCT00105016361">
    <property type="protein sequence ID" value="ENSSSCP00105011631"/>
    <property type="gene ID" value="ENSSSCG00105008179"/>
</dbReference>
<dbReference type="Ensembl" id="ENSSSCT00110023466">
    <property type="protein sequence ID" value="ENSSSCP00110015920"/>
    <property type="gene ID" value="ENSSSCG00110012092"/>
</dbReference>
<dbReference type="Ensembl" id="ENSSSCT00115009357">
    <property type="protein sequence ID" value="ENSSSCP00115008787"/>
    <property type="gene ID" value="ENSSSCG00115005369"/>
</dbReference>
<dbReference type="Ensembl" id="ENSSSCT00130048959">
    <property type="protein sequence ID" value="ENSSSCP00130034618"/>
    <property type="gene ID" value="ENSSSCG00130025224"/>
</dbReference>
<dbReference type="GeneID" id="396969"/>
<dbReference type="KEGG" id="ssc:396969"/>
<dbReference type="CTD" id="1512"/>
<dbReference type="VGNC" id="VGNC:87077">
    <property type="gene designation" value="CTSH"/>
</dbReference>
<dbReference type="eggNOG" id="KOG1543">
    <property type="taxonomic scope" value="Eukaryota"/>
</dbReference>
<dbReference type="GeneTree" id="ENSGT00940000160227"/>
<dbReference type="HOGENOM" id="CLU_012184_1_1_1"/>
<dbReference type="InParanoid" id="O46427"/>
<dbReference type="OMA" id="TCKFQPQ"/>
<dbReference type="OrthoDB" id="10253408at2759"/>
<dbReference type="TreeFam" id="TF328985"/>
<dbReference type="Reactome" id="R-SSC-2132295">
    <property type="pathway name" value="MHC class II antigen presentation"/>
</dbReference>
<dbReference type="Reactome" id="R-SSC-5683826">
    <property type="pathway name" value="Surfactant metabolism"/>
</dbReference>
<dbReference type="Reactome" id="R-SSC-6798695">
    <property type="pathway name" value="Neutrophil degranulation"/>
</dbReference>
<dbReference type="SABIO-RK" id="O46427"/>
<dbReference type="EvolutionaryTrace" id="O46427"/>
<dbReference type="Proteomes" id="UP000008227">
    <property type="component" value="Chromosome 7"/>
</dbReference>
<dbReference type="Proteomes" id="UP000314985">
    <property type="component" value="Unplaced"/>
</dbReference>
<dbReference type="Proteomes" id="UP000694570">
    <property type="component" value="Unplaced"/>
</dbReference>
<dbReference type="Proteomes" id="UP000694571">
    <property type="component" value="Unplaced"/>
</dbReference>
<dbReference type="Proteomes" id="UP000694720">
    <property type="component" value="Unplaced"/>
</dbReference>
<dbReference type="Proteomes" id="UP000694722">
    <property type="component" value="Unplaced"/>
</dbReference>
<dbReference type="Proteomes" id="UP000694723">
    <property type="component" value="Unplaced"/>
</dbReference>
<dbReference type="Proteomes" id="UP000694724">
    <property type="component" value="Unplaced"/>
</dbReference>
<dbReference type="Proteomes" id="UP000694725">
    <property type="component" value="Unplaced"/>
</dbReference>
<dbReference type="Proteomes" id="UP000694726">
    <property type="component" value="Unplaced"/>
</dbReference>
<dbReference type="Proteomes" id="UP000694727">
    <property type="component" value="Unplaced"/>
</dbReference>
<dbReference type="Proteomes" id="UP000694728">
    <property type="component" value="Unplaced"/>
</dbReference>
<dbReference type="Bgee" id="ENSSSCG00000001770">
    <property type="expression patterns" value="Expressed in endocardial endothelium and 40 other cell types or tissues"/>
</dbReference>
<dbReference type="ExpressionAtlas" id="O46427">
    <property type="expression patterns" value="baseline and differential"/>
</dbReference>
<dbReference type="GO" id="GO:0097208">
    <property type="term" value="C:alveolar lamellar body"/>
    <property type="evidence" value="ECO:0000250"/>
    <property type="project" value="UniProtKB"/>
</dbReference>
<dbReference type="GO" id="GO:0036464">
    <property type="term" value="C:cytoplasmic ribonucleoprotein granule"/>
    <property type="evidence" value="ECO:0007669"/>
    <property type="project" value="Ensembl"/>
</dbReference>
<dbReference type="GO" id="GO:0005829">
    <property type="term" value="C:cytosol"/>
    <property type="evidence" value="ECO:0000250"/>
    <property type="project" value="UniProtKB"/>
</dbReference>
<dbReference type="GO" id="GO:0005615">
    <property type="term" value="C:extracellular space"/>
    <property type="evidence" value="ECO:0000250"/>
    <property type="project" value="UniProtKB"/>
</dbReference>
<dbReference type="GO" id="GO:0005764">
    <property type="term" value="C:lysosome"/>
    <property type="evidence" value="ECO:0000250"/>
    <property type="project" value="UniProtKB"/>
</dbReference>
<dbReference type="GO" id="GO:0004177">
    <property type="term" value="F:aminopeptidase activity"/>
    <property type="evidence" value="ECO:0000250"/>
    <property type="project" value="UniProtKB"/>
</dbReference>
<dbReference type="GO" id="GO:0008656">
    <property type="term" value="F:cysteine-type endopeptidase activator activity involved in apoptotic process"/>
    <property type="evidence" value="ECO:0000250"/>
    <property type="project" value="UniProtKB"/>
</dbReference>
<dbReference type="GO" id="GO:0004197">
    <property type="term" value="F:cysteine-type endopeptidase activity"/>
    <property type="evidence" value="ECO:0000250"/>
    <property type="project" value="UniProtKB"/>
</dbReference>
<dbReference type="GO" id="GO:0008234">
    <property type="term" value="F:cysteine-type peptidase activity"/>
    <property type="evidence" value="ECO:0000314"/>
    <property type="project" value="ARUK-UCL"/>
</dbReference>
<dbReference type="GO" id="GO:0004175">
    <property type="term" value="F:endopeptidase activity"/>
    <property type="evidence" value="ECO:0000250"/>
    <property type="project" value="UniProtKB"/>
</dbReference>
<dbReference type="GO" id="GO:0030108">
    <property type="term" value="F:HLA-A specific activating MHC class I receptor activity"/>
    <property type="evidence" value="ECO:0000250"/>
    <property type="project" value="UniProtKB"/>
</dbReference>
<dbReference type="GO" id="GO:0004252">
    <property type="term" value="F:serine-type endopeptidase activity"/>
    <property type="evidence" value="ECO:0000250"/>
    <property type="project" value="UniProtKB"/>
</dbReference>
<dbReference type="GO" id="GO:0070324">
    <property type="term" value="F:thyroid hormone binding"/>
    <property type="evidence" value="ECO:0000250"/>
    <property type="project" value="UniProtKB"/>
</dbReference>
<dbReference type="GO" id="GO:0010815">
    <property type="term" value="P:bradykinin catabolic process"/>
    <property type="evidence" value="ECO:0000250"/>
    <property type="project" value="UniProtKB"/>
</dbReference>
<dbReference type="GO" id="GO:0097067">
    <property type="term" value="P:cellular response to thyroid hormone stimulus"/>
    <property type="evidence" value="ECO:0007669"/>
    <property type="project" value="Ensembl"/>
</dbReference>
<dbReference type="GO" id="GO:0060448">
    <property type="term" value="P:dichotomous subdivision of terminal units involved in lung branching"/>
    <property type="evidence" value="ECO:0000250"/>
    <property type="project" value="UniProtKB"/>
</dbReference>
<dbReference type="GO" id="GO:0070371">
    <property type="term" value="P:ERK1 and ERK2 cascade"/>
    <property type="evidence" value="ECO:0000250"/>
    <property type="project" value="UniProtKB"/>
</dbReference>
<dbReference type="GO" id="GO:0006955">
    <property type="term" value="P:immune response"/>
    <property type="evidence" value="ECO:0000318"/>
    <property type="project" value="GO_Central"/>
</dbReference>
<dbReference type="GO" id="GO:0002764">
    <property type="term" value="P:immune response-regulating signaling pathway"/>
    <property type="evidence" value="ECO:0000250"/>
    <property type="project" value="UniProtKB"/>
</dbReference>
<dbReference type="GO" id="GO:1905146">
    <property type="term" value="P:lysosomal protein catabolic process"/>
    <property type="evidence" value="ECO:0000314"/>
    <property type="project" value="ARUK-UCL"/>
</dbReference>
<dbReference type="GO" id="GO:0033619">
    <property type="term" value="P:membrane protein proteolysis"/>
    <property type="evidence" value="ECO:0000250"/>
    <property type="project" value="UniProtKB"/>
</dbReference>
<dbReference type="GO" id="GO:0001656">
    <property type="term" value="P:metanephros development"/>
    <property type="evidence" value="ECO:0000250"/>
    <property type="project" value="UniProtKB"/>
</dbReference>
<dbReference type="GO" id="GO:0010813">
    <property type="term" value="P:neuropeptide catabolic process"/>
    <property type="evidence" value="ECO:0000250"/>
    <property type="project" value="UniProtKB"/>
</dbReference>
<dbReference type="GO" id="GO:2001235">
    <property type="term" value="P:positive regulation of apoptotic signaling pathway"/>
    <property type="evidence" value="ECO:0000318"/>
    <property type="project" value="GO_Central"/>
</dbReference>
<dbReference type="GO" id="GO:0030335">
    <property type="term" value="P:positive regulation of cell migration"/>
    <property type="evidence" value="ECO:0000250"/>
    <property type="project" value="UniProtKB"/>
</dbReference>
<dbReference type="GO" id="GO:0010634">
    <property type="term" value="P:positive regulation of epithelial cell migration"/>
    <property type="evidence" value="ECO:0000250"/>
    <property type="project" value="UniProtKB"/>
</dbReference>
<dbReference type="GO" id="GO:0010628">
    <property type="term" value="P:positive regulation of gene expression"/>
    <property type="evidence" value="ECO:0000250"/>
    <property type="project" value="UniProtKB"/>
</dbReference>
<dbReference type="GO" id="GO:0031648">
    <property type="term" value="P:protein destabilization"/>
    <property type="evidence" value="ECO:0000250"/>
    <property type="project" value="UniProtKB"/>
</dbReference>
<dbReference type="GO" id="GO:0006508">
    <property type="term" value="P:proteolysis"/>
    <property type="evidence" value="ECO:0000250"/>
    <property type="project" value="UniProtKB"/>
</dbReference>
<dbReference type="GO" id="GO:0051603">
    <property type="term" value="P:proteolysis involved in protein catabolic process"/>
    <property type="evidence" value="ECO:0000318"/>
    <property type="project" value="GO_Central"/>
</dbReference>
<dbReference type="GO" id="GO:0032526">
    <property type="term" value="P:response to retinoic acid"/>
    <property type="evidence" value="ECO:0000250"/>
    <property type="project" value="UniProtKB"/>
</dbReference>
<dbReference type="GO" id="GO:0043129">
    <property type="term" value="P:surfactant homeostasis"/>
    <property type="evidence" value="ECO:0000250"/>
    <property type="project" value="UniProtKB"/>
</dbReference>
<dbReference type="GO" id="GO:0001913">
    <property type="term" value="P:T cell mediated cytotoxicity"/>
    <property type="evidence" value="ECO:0000250"/>
    <property type="project" value="UniProtKB"/>
</dbReference>
<dbReference type="GO" id="GO:0031638">
    <property type="term" value="P:zymogen activation"/>
    <property type="evidence" value="ECO:0000250"/>
    <property type="project" value="UniProtKB"/>
</dbReference>
<dbReference type="CDD" id="cd02248">
    <property type="entry name" value="Peptidase_C1A"/>
    <property type="match status" value="1"/>
</dbReference>
<dbReference type="FunFam" id="3.90.70.10:FF:000074">
    <property type="entry name" value="Pro-cathepsin H"/>
    <property type="match status" value="1"/>
</dbReference>
<dbReference type="Gene3D" id="3.90.70.10">
    <property type="entry name" value="Cysteine proteinases"/>
    <property type="match status" value="1"/>
</dbReference>
<dbReference type="InterPro" id="IPR038765">
    <property type="entry name" value="Papain-like_cys_pep_sf"/>
</dbReference>
<dbReference type="InterPro" id="IPR025661">
    <property type="entry name" value="Pept_asp_AS"/>
</dbReference>
<dbReference type="InterPro" id="IPR000169">
    <property type="entry name" value="Pept_cys_AS"/>
</dbReference>
<dbReference type="InterPro" id="IPR025660">
    <property type="entry name" value="Pept_his_AS"/>
</dbReference>
<dbReference type="InterPro" id="IPR013128">
    <property type="entry name" value="Peptidase_C1A"/>
</dbReference>
<dbReference type="InterPro" id="IPR000668">
    <property type="entry name" value="Peptidase_C1A_C"/>
</dbReference>
<dbReference type="InterPro" id="IPR039417">
    <property type="entry name" value="Peptidase_C1A_papain-like"/>
</dbReference>
<dbReference type="InterPro" id="IPR013201">
    <property type="entry name" value="Prot_inhib_I29"/>
</dbReference>
<dbReference type="PANTHER" id="PTHR12411">
    <property type="entry name" value="CYSTEINE PROTEASE FAMILY C1-RELATED"/>
    <property type="match status" value="1"/>
</dbReference>
<dbReference type="Pfam" id="PF08246">
    <property type="entry name" value="Inhibitor_I29"/>
    <property type="match status" value="1"/>
</dbReference>
<dbReference type="Pfam" id="PF00112">
    <property type="entry name" value="Peptidase_C1"/>
    <property type="match status" value="1"/>
</dbReference>
<dbReference type="PRINTS" id="PR00705">
    <property type="entry name" value="PAPAIN"/>
</dbReference>
<dbReference type="SMART" id="SM00848">
    <property type="entry name" value="Inhibitor_I29"/>
    <property type="match status" value="1"/>
</dbReference>
<dbReference type="SMART" id="SM00645">
    <property type="entry name" value="Pept_C1"/>
    <property type="match status" value="1"/>
</dbReference>
<dbReference type="SUPFAM" id="SSF54001">
    <property type="entry name" value="Cysteine proteinases"/>
    <property type="match status" value="1"/>
</dbReference>
<dbReference type="PROSITE" id="PS00640">
    <property type="entry name" value="THIOL_PROTEASE_ASN"/>
    <property type="match status" value="1"/>
</dbReference>
<dbReference type="PROSITE" id="PS00139">
    <property type="entry name" value="THIOL_PROTEASE_CYS"/>
    <property type="match status" value="1"/>
</dbReference>
<dbReference type="PROSITE" id="PS00639">
    <property type="entry name" value="THIOL_PROTEASE_HIS"/>
    <property type="match status" value="1"/>
</dbReference>
<sequence length="335" mass="37455">MWAVLSLLCAGAWLLGPPACGASNLAVSSFEKLHFKSWMVQHQKKYSLEEYHHRLQVFVSNWRKINAHNAGNHTFKLGLNQFSDMSFDEIRHKYLWSEPQNCSATKGNYLRGTGPYPPSMDWRKKGNFVSPVKNQGSCGSCWTFSTTGALESAVAIATGKMLSLAEQQLVDCAQNFNNHGCQGGLPSQAFEYIRYNKGIMGEDTYPYKGQDDHCKFQPDKAIAFVKDVANITMNDEEAMVEAVALYNPVSFAFEVTNDFLMYRKGIYSSTSCHKTPDKVNHAVLAVGYGEENGIPYWIVKNSWGPQWGMNGYFLIERGKNMCGLAACASYPIPLV</sequence>
<feature type="signal peptide" evidence="2">
    <location>
        <begin position="1"/>
        <end position="22"/>
    </location>
</feature>
<feature type="propeptide" id="PRO_0000026218" evidence="2">
    <location>
        <begin position="23"/>
        <end position="97"/>
    </location>
</feature>
<feature type="peptide" id="PRO_0000026219" description="Cathepsin H mini chain">
    <location>
        <begin position="98"/>
        <end position="105"/>
    </location>
</feature>
<feature type="propeptide" id="PRO_0000026220">
    <location>
        <begin position="107"/>
        <end position="115"/>
    </location>
</feature>
<feature type="chain" id="PRO_0000026221" description="Cathepsin H">
    <location>
        <begin position="116"/>
        <end position="335"/>
    </location>
</feature>
<feature type="chain" id="PRO_0000026222" description="Cathepsin H heavy chain" evidence="1">
    <location>
        <begin position="116"/>
        <end position="292"/>
    </location>
</feature>
<feature type="chain" id="PRO_0000026223" description="Cathepsin H light chain" evidence="1">
    <location>
        <begin position="293"/>
        <end position="335"/>
    </location>
</feature>
<feature type="active site">
    <location>
        <position position="141"/>
    </location>
</feature>
<feature type="active site">
    <location>
        <position position="281"/>
    </location>
</feature>
<feature type="active site">
    <location>
        <position position="301"/>
    </location>
</feature>
<feature type="glycosylation site" description="N-linked (GlcNAc...) asparagine" evidence="2">
    <location>
        <position position="72"/>
    </location>
</feature>
<feature type="glycosylation site" description="N-linked (GlcNAc...) asparagine" evidence="2">
    <location>
        <position position="101"/>
    </location>
</feature>
<feature type="glycosylation site" description="N-linked (GlcNAc...) asparagine" evidence="2">
    <location>
        <position position="230"/>
    </location>
</feature>
<feature type="disulfide bond">
    <location>
        <begin position="102"/>
        <end position="327"/>
    </location>
</feature>
<feature type="disulfide bond">
    <location>
        <begin position="138"/>
        <end position="181"/>
    </location>
</feature>
<feature type="disulfide bond">
    <location>
        <begin position="172"/>
        <end position="214"/>
    </location>
</feature>
<feature type="disulfide bond">
    <location>
        <begin position="272"/>
        <end position="322"/>
    </location>
</feature>
<feature type="helix" evidence="8">
    <location>
        <begin position="122"/>
        <end position="125"/>
    </location>
</feature>
<feature type="helix" evidence="8">
    <location>
        <begin position="141"/>
        <end position="158"/>
    </location>
</feature>
<feature type="helix" evidence="8">
    <location>
        <begin position="166"/>
        <end position="172"/>
    </location>
</feature>
<feature type="helix" evidence="8">
    <location>
        <begin position="173"/>
        <end position="176"/>
    </location>
</feature>
<feature type="helix" evidence="8">
    <location>
        <begin position="180"/>
        <end position="182"/>
    </location>
</feature>
<feature type="helix" evidence="8">
    <location>
        <begin position="186"/>
        <end position="196"/>
    </location>
</feature>
<feature type="strand" evidence="8">
    <location>
        <begin position="199"/>
        <end position="201"/>
    </location>
</feature>
<feature type="turn" evidence="8">
    <location>
        <begin position="202"/>
        <end position="204"/>
    </location>
</feature>
<feature type="helix" evidence="8">
    <location>
        <begin position="218"/>
        <end position="220"/>
    </location>
</feature>
<feature type="strand" evidence="8">
    <location>
        <begin position="221"/>
        <end position="223"/>
    </location>
</feature>
<feature type="strand" evidence="8">
    <location>
        <begin position="225"/>
        <end position="230"/>
    </location>
</feature>
<feature type="helix" evidence="8">
    <location>
        <begin position="236"/>
        <end position="245"/>
    </location>
</feature>
<feature type="strand" evidence="8">
    <location>
        <begin position="249"/>
        <end position="253"/>
    </location>
</feature>
<feature type="helix" evidence="8">
    <location>
        <begin position="257"/>
        <end position="260"/>
    </location>
</feature>
<feature type="strand" evidence="8">
    <location>
        <begin position="264"/>
        <end position="267"/>
    </location>
</feature>
<feature type="strand" evidence="7">
    <location>
        <begin position="270"/>
        <end position="272"/>
    </location>
</feature>
<feature type="turn" evidence="8">
    <location>
        <begin position="276"/>
        <end position="278"/>
    </location>
</feature>
<feature type="strand" evidence="8">
    <location>
        <begin position="281"/>
        <end position="291"/>
    </location>
</feature>
<feature type="strand" evidence="8">
    <location>
        <begin position="294"/>
        <end position="300"/>
    </location>
</feature>
<feature type="strand" evidence="8">
    <location>
        <begin position="312"/>
        <end position="316"/>
    </location>
</feature>
<feature type="turn" evidence="6">
    <location>
        <begin position="317"/>
        <end position="320"/>
    </location>
</feature>
<feature type="helix" evidence="8">
    <location>
        <begin position="321"/>
        <end position="323"/>
    </location>
</feature>
<feature type="strand" evidence="8">
    <location>
        <begin position="329"/>
        <end position="333"/>
    </location>
</feature>
<evidence type="ECO:0000250" key="1"/>
<evidence type="ECO:0000255" key="2"/>
<evidence type="ECO:0000255" key="3">
    <source>
        <dbReference type="PROSITE-ProRule" id="PRU10088"/>
    </source>
</evidence>
<evidence type="ECO:0000255" key="4">
    <source>
        <dbReference type="PROSITE-ProRule" id="PRU10089"/>
    </source>
</evidence>
<evidence type="ECO:0000255" key="5">
    <source>
        <dbReference type="PROSITE-ProRule" id="PRU10090"/>
    </source>
</evidence>
<evidence type="ECO:0007829" key="6">
    <source>
        <dbReference type="PDB" id="1NB3"/>
    </source>
</evidence>
<evidence type="ECO:0007829" key="7">
    <source>
        <dbReference type="PDB" id="1NB5"/>
    </source>
</evidence>
<evidence type="ECO:0007829" key="8">
    <source>
        <dbReference type="PDB" id="8PCH"/>
    </source>
</evidence>
<organism>
    <name type="scientific">Sus scrofa</name>
    <name type="common">Pig</name>
    <dbReference type="NCBI Taxonomy" id="9823"/>
    <lineage>
        <taxon>Eukaryota</taxon>
        <taxon>Metazoa</taxon>
        <taxon>Chordata</taxon>
        <taxon>Craniata</taxon>
        <taxon>Vertebrata</taxon>
        <taxon>Euteleostomi</taxon>
        <taxon>Mammalia</taxon>
        <taxon>Eutheria</taxon>
        <taxon>Laurasiatheria</taxon>
        <taxon>Artiodactyla</taxon>
        <taxon>Suina</taxon>
        <taxon>Suidae</taxon>
        <taxon>Sus</taxon>
    </lineage>
</organism>
<gene>
    <name type="primary">CTSH</name>
</gene>
<proteinExistence type="evidence at protein level"/>
<protein>
    <recommendedName>
        <fullName>Pro-cathepsin H</fullName>
    </recommendedName>
    <component>
        <recommendedName>
            <fullName>Cathepsin H mini chain</fullName>
        </recommendedName>
    </component>
    <component>
        <recommendedName>
            <fullName>Cathepsin H</fullName>
            <ecNumber>3.4.22.16</ecNumber>
        </recommendedName>
    </component>
    <component>
        <recommendedName>
            <fullName>Cathepsin H heavy chain</fullName>
        </recommendedName>
    </component>
    <component>
        <recommendedName>
            <fullName>Cathepsin H light chain</fullName>
        </recommendedName>
    </component>
</protein>
<keyword id="KW-0002">3D-structure</keyword>
<keyword id="KW-1015">Disulfide bond</keyword>
<keyword id="KW-0325">Glycoprotein</keyword>
<keyword id="KW-0378">Hydrolase</keyword>
<keyword id="KW-0458">Lysosome</keyword>
<keyword id="KW-0645">Protease</keyword>
<keyword id="KW-1185">Reference proteome</keyword>
<keyword id="KW-0732">Signal</keyword>
<keyword id="KW-0788">Thiol protease</keyword>
<keyword id="KW-0865">Zymogen</keyword>
<accession>O46427</accession>
<name>CATH_PIG</name>
<comment type="function">
    <text>Important for the overall degradation of proteins in lysosomes.</text>
</comment>
<comment type="catalytic activity">
    <reaction>
        <text>Hydrolysis of proteins, acting as an aminopeptidase (notably, cleaving Arg-|-Xaa bonds) as well as an endopeptidase.</text>
        <dbReference type="EC" id="3.4.22.16"/>
    </reaction>
</comment>
<comment type="subunit">
    <text>Composed of cathepsin H and mini chain; disulfide-linked. Cathepsin H may be split into heavy and light chain. All chains are held together by disulfide bonds.</text>
</comment>
<comment type="subcellular location">
    <subcellularLocation>
        <location>Lysosome</location>
    </subcellularLocation>
</comment>
<comment type="similarity">
    <text evidence="3 4 5">Belongs to the peptidase C1 family.</text>
</comment>